<keyword id="KW-0046">Antibiotic resistance</keyword>
<keyword id="KW-0997">Cell inner membrane</keyword>
<keyword id="KW-1003">Cell membrane</keyword>
<keyword id="KW-0472">Membrane</keyword>
<keyword id="KW-1185">Reference proteome</keyword>
<keyword id="KW-0812">Transmembrane</keyword>
<keyword id="KW-1133">Transmembrane helix</keyword>
<keyword id="KW-0813">Transport</keyword>
<feature type="chain" id="PRO_0000405336" description="Multidrug transporter MdfA">
    <location>
        <begin position="1"/>
        <end position="410"/>
    </location>
</feature>
<feature type="topological domain" description="Cytoplasmic" evidence="2">
    <location>
        <begin position="1"/>
        <end position="15"/>
    </location>
</feature>
<feature type="transmembrane region" description="Helical" evidence="2">
    <location>
        <begin position="16"/>
        <end position="36"/>
    </location>
</feature>
<feature type="topological domain" description="Periplasmic" evidence="2">
    <location>
        <begin position="37"/>
        <end position="52"/>
    </location>
</feature>
<feature type="transmembrane region" description="Helical" evidence="2">
    <location>
        <begin position="53"/>
        <end position="73"/>
    </location>
</feature>
<feature type="topological domain" description="Cytoplasmic" evidence="2">
    <location>
        <begin position="74"/>
        <end position="84"/>
    </location>
</feature>
<feature type="transmembrane region" description="Helical" evidence="2">
    <location>
        <begin position="85"/>
        <end position="105"/>
    </location>
</feature>
<feature type="topological domain" description="Periplasmic" evidence="2">
    <location>
        <begin position="106"/>
        <end position="109"/>
    </location>
</feature>
<feature type="transmembrane region" description="Helical" evidence="2">
    <location>
        <begin position="110"/>
        <end position="130"/>
    </location>
</feature>
<feature type="topological domain" description="Cytoplasmic" evidence="2">
    <location>
        <begin position="131"/>
        <end position="144"/>
    </location>
</feature>
<feature type="transmembrane region" description="Helical" evidence="2">
    <location>
        <begin position="145"/>
        <end position="165"/>
    </location>
</feature>
<feature type="topological domain" description="Periplasmic" evidence="2">
    <location>
        <position position="166"/>
    </location>
</feature>
<feature type="transmembrane region" description="Helical" evidence="2">
    <location>
        <begin position="167"/>
        <end position="187"/>
    </location>
</feature>
<feature type="topological domain" description="Cytoplasmic" evidence="2">
    <location>
        <begin position="188"/>
        <end position="226"/>
    </location>
</feature>
<feature type="transmembrane region" description="Helical" evidence="2">
    <location>
        <begin position="227"/>
        <end position="247"/>
    </location>
</feature>
<feature type="topological domain" description="Periplasmic" evidence="2">
    <location>
        <begin position="248"/>
        <end position="255"/>
    </location>
</feature>
<feature type="transmembrane region" description="Helical" evidence="2">
    <location>
        <begin position="256"/>
        <end position="276"/>
    </location>
</feature>
<feature type="topological domain" description="Cytoplasmic" evidence="2">
    <location>
        <begin position="277"/>
        <end position="286"/>
    </location>
</feature>
<feature type="transmembrane region" description="Helical" evidence="2">
    <location>
        <begin position="287"/>
        <end position="307"/>
    </location>
</feature>
<feature type="topological domain" description="Periplasmic" evidence="2">
    <location>
        <begin position="308"/>
        <end position="313"/>
    </location>
</feature>
<feature type="transmembrane region" description="Helical" evidence="2">
    <location>
        <begin position="314"/>
        <end position="334"/>
    </location>
</feature>
<feature type="topological domain" description="Cytoplasmic" evidence="2">
    <location>
        <begin position="335"/>
        <end position="346"/>
    </location>
</feature>
<feature type="transmembrane region" description="Helical" evidence="2">
    <location>
        <begin position="347"/>
        <end position="367"/>
    </location>
</feature>
<feature type="topological domain" description="Periplasmic" evidence="2">
    <location>
        <begin position="368"/>
        <end position="378"/>
    </location>
</feature>
<feature type="transmembrane region" description="Helical" evidence="2">
    <location>
        <begin position="379"/>
        <end position="399"/>
    </location>
</feature>
<feature type="topological domain" description="Cytoplasmic" evidence="2">
    <location>
        <begin position="400"/>
        <end position="410"/>
    </location>
</feature>
<proteinExistence type="inferred from homology"/>
<accession>D0ZHC6</accession>
<name>MDFA_EDWPI</name>
<protein>
    <recommendedName>
        <fullName>Multidrug transporter MdfA</fullName>
    </recommendedName>
</protein>
<reference key="1">
    <citation type="journal article" date="2009" name="PLoS ONE">
        <title>Genome sequence of the versatile fish pathogen Edwardsiella tarda provides insights into its adaptation to broad host ranges and intracellular niches.</title>
        <authorList>
            <person name="Wang Q."/>
            <person name="Yang M."/>
            <person name="Xiao J."/>
            <person name="Wu H."/>
            <person name="Wang X."/>
            <person name="Lv Y."/>
            <person name="Xu L."/>
            <person name="Zheng H."/>
            <person name="Wang S."/>
            <person name="Zhao G."/>
            <person name="Liu Q."/>
            <person name="Zhang Y."/>
        </authorList>
    </citation>
    <scope>NUCLEOTIDE SEQUENCE [LARGE SCALE GENOMIC DNA]</scope>
    <source>
        <strain>EIB202 / CCTCC M208068</strain>
    </source>
</reference>
<sequence>MQNRLSSTRRLGRRALLFPLCLVLYEFATYIGNDMIQPGMLSVVQTFGVDESWVPTSMTAYLAGGMFLQWLLGPISDRIGRRPVMLTGTLYFAVTCLAILLTNSIEQFTLMRFLQGISLCFIGAVGYAAIQESFEESVCIKITALMANVALIAPLLGPLAGAAWVHLFPWEGMFILFAALSLLAFLGLYKAMPETATRRGETLSLSALGHDYALVLKNKRFLGGALACGFASLPLLAWIAQSPVIIISGEGLSSYDYGMLQVPIFGMLILGNFTLARLSGRRPVRRLIQLGAWPMVGGLAIAAVSTLYSAHAYLWMTAGLSLYAFGIGLANAGLYRLTLFSSTMSKGTVSAAMGMISMFIYTLGIEVGKHAWLLGGNGAFNLFNLISGLLWLALVALMLRDKRVGGTTER</sequence>
<evidence type="ECO:0000250" key="1"/>
<evidence type="ECO:0000255" key="2"/>
<evidence type="ECO:0000305" key="3"/>
<dbReference type="EMBL" id="CP001135">
    <property type="protein sequence ID" value="ACY86319.1"/>
    <property type="status" value="ALT_INIT"/>
    <property type="molecule type" value="Genomic_DNA"/>
</dbReference>
<dbReference type="RefSeq" id="WP_015462569.1">
    <property type="nucleotide sequence ID" value="NZ_JBCHVA010000002.1"/>
</dbReference>
<dbReference type="SMR" id="D0ZHC6"/>
<dbReference type="KEGG" id="etr:ETAE_3488"/>
<dbReference type="HOGENOM" id="CLU_001265_47_2_6"/>
<dbReference type="OrthoDB" id="9814303at2"/>
<dbReference type="Proteomes" id="UP000002634">
    <property type="component" value="Chromosome"/>
</dbReference>
<dbReference type="GO" id="GO:0005886">
    <property type="term" value="C:plasma membrane"/>
    <property type="evidence" value="ECO:0007669"/>
    <property type="project" value="UniProtKB-SubCell"/>
</dbReference>
<dbReference type="GO" id="GO:0015385">
    <property type="term" value="F:sodium:proton antiporter activity"/>
    <property type="evidence" value="ECO:0007669"/>
    <property type="project" value="TreeGrafter"/>
</dbReference>
<dbReference type="GO" id="GO:0046677">
    <property type="term" value="P:response to antibiotic"/>
    <property type="evidence" value="ECO:0007669"/>
    <property type="project" value="UniProtKB-KW"/>
</dbReference>
<dbReference type="GO" id="GO:1990961">
    <property type="term" value="P:xenobiotic detoxification by transmembrane export across the plasma membrane"/>
    <property type="evidence" value="ECO:0007669"/>
    <property type="project" value="TreeGrafter"/>
</dbReference>
<dbReference type="CDD" id="cd17320">
    <property type="entry name" value="MFS_MdfA_MDR_like"/>
    <property type="match status" value="1"/>
</dbReference>
<dbReference type="Gene3D" id="1.20.1720.10">
    <property type="entry name" value="Multidrug resistance protein D"/>
    <property type="match status" value="1"/>
</dbReference>
<dbReference type="InterPro" id="IPR011701">
    <property type="entry name" value="MFS"/>
</dbReference>
<dbReference type="InterPro" id="IPR020846">
    <property type="entry name" value="MFS_dom"/>
</dbReference>
<dbReference type="InterPro" id="IPR036259">
    <property type="entry name" value="MFS_trans_sf"/>
</dbReference>
<dbReference type="InterPro" id="IPR005829">
    <property type="entry name" value="Sugar_transporter_CS"/>
</dbReference>
<dbReference type="NCBIfam" id="NF011931">
    <property type="entry name" value="PRK15402.1"/>
    <property type="match status" value="1"/>
</dbReference>
<dbReference type="PANTHER" id="PTHR23502">
    <property type="entry name" value="MAJOR FACILITATOR SUPERFAMILY"/>
    <property type="match status" value="1"/>
</dbReference>
<dbReference type="PANTHER" id="PTHR23502:SF43">
    <property type="entry name" value="MULTIDRUG TRANSPORTER MDFA"/>
    <property type="match status" value="1"/>
</dbReference>
<dbReference type="Pfam" id="PF07690">
    <property type="entry name" value="MFS_1"/>
    <property type="match status" value="1"/>
</dbReference>
<dbReference type="SUPFAM" id="SSF103473">
    <property type="entry name" value="MFS general substrate transporter"/>
    <property type="match status" value="1"/>
</dbReference>
<dbReference type="PROSITE" id="PS50850">
    <property type="entry name" value="MFS"/>
    <property type="match status" value="1"/>
</dbReference>
<comment type="function">
    <text evidence="1">Efflux pump driven by the proton motive force. Confers resistance to a broad spectrum of chemically unrelated drugs (By similarity).</text>
</comment>
<comment type="subunit">
    <text evidence="1">Monomer.</text>
</comment>
<comment type="subcellular location">
    <subcellularLocation>
        <location evidence="1">Cell inner membrane</location>
        <topology evidence="1">Multi-pass membrane protein</topology>
    </subcellularLocation>
</comment>
<comment type="similarity">
    <text evidence="3">Belongs to the major facilitator superfamily. MdfA family.</text>
</comment>
<comment type="sequence caution" evidence="3">
    <conflict type="erroneous initiation">
        <sequence resource="EMBL-CDS" id="ACY86319"/>
    </conflict>
    <text>Truncated N-terminus.</text>
</comment>
<gene>
    <name type="primary">mdfA</name>
    <name type="ordered locus">ETAE_3488</name>
</gene>
<organism>
    <name type="scientific">Edwardsiella piscicida</name>
    <dbReference type="NCBI Taxonomy" id="1263550"/>
    <lineage>
        <taxon>Bacteria</taxon>
        <taxon>Pseudomonadati</taxon>
        <taxon>Pseudomonadota</taxon>
        <taxon>Gammaproteobacteria</taxon>
        <taxon>Enterobacterales</taxon>
        <taxon>Hafniaceae</taxon>
        <taxon>Edwardsiella</taxon>
    </lineage>
</organism>